<accession>B7NSN2</accession>
<sequence>MTRIKINARRIFSLLIPFFFFTSVHAEQTAAPAKPVTVEAKNETFAPQHPDQYLSWKATSEQSERVDALAEDPRLVILWAGYPFSRDYNKPRGHAFAVTDVRETLRTGAPKNAEDGPLPMACWSCKSPDVARLIQKDGEDGYFHGKWARGGPEIVNNLGCADCHNTASPEFAKGKPELTLSRPYAARAMEAIGKPFEKAGRFDQQSMVCGQCHVEYYFDGKNKAVKFPWDDGMKVENMEQYYDKIAFSDWTNSLSKTPMLKAQHPEYETWTAGIHGKNNVTCIDCHMPKVQNAEGKLYTDHKIGNPFDNFAQTCANCHTQDKAALQKVVAERKQSINDLKIKVEDQLVHAHFEAKAALDAGATEAEMKPIQDDIRHAQWRWDLAIASHGIHMHAPEEGLRMLGTAMDKAADARTKLARLLATKGITHEIQIPDISTKEKAQQAIGLNMEQIKAEKQDFIKTVIPQWEEQARKNGLLSQ</sequence>
<dbReference type="EC" id="1.7.2.2" evidence="1"/>
<dbReference type="EMBL" id="CU928164">
    <property type="protein sequence ID" value="CAR20597.1"/>
    <property type="molecule type" value="Genomic_DNA"/>
</dbReference>
<dbReference type="RefSeq" id="WP_000196875.1">
    <property type="nucleotide sequence ID" value="NC_011750.1"/>
</dbReference>
<dbReference type="RefSeq" id="YP_002410365.1">
    <property type="nucleotide sequence ID" value="NC_011750.1"/>
</dbReference>
<dbReference type="SMR" id="B7NSN2"/>
<dbReference type="STRING" id="585057.ECIAI39_4492"/>
<dbReference type="GeneID" id="93777759"/>
<dbReference type="KEGG" id="ect:ECIAI39_4492"/>
<dbReference type="PATRIC" id="fig|585057.6.peg.4640"/>
<dbReference type="HOGENOM" id="CLU_035040_1_0_6"/>
<dbReference type="UniPathway" id="UPA00653"/>
<dbReference type="Proteomes" id="UP000000749">
    <property type="component" value="Chromosome"/>
</dbReference>
<dbReference type="GO" id="GO:0030288">
    <property type="term" value="C:outer membrane-bounded periplasmic space"/>
    <property type="evidence" value="ECO:0007669"/>
    <property type="project" value="TreeGrafter"/>
</dbReference>
<dbReference type="GO" id="GO:0005509">
    <property type="term" value="F:calcium ion binding"/>
    <property type="evidence" value="ECO:0007669"/>
    <property type="project" value="UniProtKB-UniRule"/>
</dbReference>
<dbReference type="GO" id="GO:0020037">
    <property type="term" value="F:heme binding"/>
    <property type="evidence" value="ECO:0007669"/>
    <property type="project" value="InterPro"/>
</dbReference>
<dbReference type="GO" id="GO:0005506">
    <property type="term" value="F:iron ion binding"/>
    <property type="evidence" value="ECO:0007669"/>
    <property type="project" value="UniProtKB-UniRule"/>
</dbReference>
<dbReference type="GO" id="GO:0042279">
    <property type="term" value="F:nitrite reductase (cytochrome, ammonia-forming) activity"/>
    <property type="evidence" value="ECO:0007669"/>
    <property type="project" value="UniProtKB-UniRule"/>
</dbReference>
<dbReference type="GO" id="GO:0019645">
    <property type="term" value="P:anaerobic electron transport chain"/>
    <property type="evidence" value="ECO:0007669"/>
    <property type="project" value="TreeGrafter"/>
</dbReference>
<dbReference type="GO" id="GO:0042128">
    <property type="term" value="P:nitrate assimilation"/>
    <property type="evidence" value="ECO:0007669"/>
    <property type="project" value="UniProtKB-UniRule"/>
</dbReference>
<dbReference type="CDD" id="cd00548">
    <property type="entry name" value="NrfA-like"/>
    <property type="match status" value="1"/>
</dbReference>
<dbReference type="FunFam" id="1.10.1130.10:FF:000002">
    <property type="entry name" value="Cytochrome c-552"/>
    <property type="match status" value="1"/>
</dbReference>
<dbReference type="FunFam" id="1.20.140.10:FF:000014">
    <property type="entry name" value="Cytochrome c-552"/>
    <property type="match status" value="1"/>
</dbReference>
<dbReference type="Gene3D" id="1.20.140.10">
    <property type="entry name" value="Butyryl-CoA Dehydrogenase, subunit A, domain 3"/>
    <property type="match status" value="1"/>
</dbReference>
<dbReference type="Gene3D" id="1.10.1130.10">
    <property type="entry name" value="Flavocytochrome C3, Chain A"/>
    <property type="match status" value="1"/>
</dbReference>
<dbReference type="HAMAP" id="MF_01182">
    <property type="entry name" value="Cytochrom_C552"/>
    <property type="match status" value="1"/>
</dbReference>
<dbReference type="InterPro" id="IPR003321">
    <property type="entry name" value="Cyt_c552"/>
</dbReference>
<dbReference type="InterPro" id="IPR017570">
    <property type="entry name" value="Cyt_c_NO2Rdtase_formate-dep"/>
</dbReference>
<dbReference type="InterPro" id="IPR036280">
    <property type="entry name" value="Multihaem_cyt_sf"/>
</dbReference>
<dbReference type="NCBIfam" id="TIGR03152">
    <property type="entry name" value="cyto_c552_HCOOH"/>
    <property type="match status" value="1"/>
</dbReference>
<dbReference type="NCBIfam" id="NF008339">
    <property type="entry name" value="PRK11125.1"/>
    <property type="match status" value="1"/>
</dbReference>
<dbReference type="PANTHER" id="PTHR30633:SF0">
    <property type="entry name" value="CYTOCHROME C-552"/>
    <property type="match status" value="1"/>
</dbReference>
<dbReference type="PANTHER" id="PTHR30633">
    <property type="entry name" value="CYTOCHROME C-552 RESPIRATORY NITRITE REDUCTASE"/>
    <property type="match status" value="1"/>
</dbReference>
<dbReference type="Pfam" id="PF02335">
    <property type="entry name" value="Cytochrom_C552"/>
    <property type="match status" value="1"/>
</dbReference>
<dbReference type="PIRSF" id="PIRSF000243">
    <property type="entry name" value="Cyt_c552"/>
    <property type="match status" value="1"/>
</dbReference>
<dbReference type="SUPFAM" id="SSF48695">
    <property type="entry name" value="Multiheme cytochromes"/>
    <property type="match status" value="1"/>
</dbReference>
<dbReference type="PROSITE" id="PS51008">
    <property type="entry name" value="MULTIHEME_CYTC"/>
    <property type="match status" value="1"/>
</dbReference>
<reference key="1">
    <citation type="journal article" date="2009" name="PLoS Genet.">
        <title>Organised genome dynamics in the Escherichia coli species results in highly diverse adaptive paths.</title>
        <authorList>
            <person name="Touchon M."/>
            <person name="Hoede C."/>
            <person name="Tenaillon O."/>
            <person name="Barbe V."/>
            <person name="Baeriswyl S."/>
            <person name="Bidet P."/>
            <person name="Bingen E."/>
            <person name="Bonacorsi S."/>
            <person name="Bouchier C."/>
            <person name="Bouvet O."/>
            <person name="Calteau A."/>
            <person name="Chiapello H."/>
            <person name="Clermont O."/>
            <person name="Cruveiller S."/>
            <person name="Danchin A."/>
            <person name="Diard M."/>
            <person name="Dossat C."/>
            <person name="Karoui M.E."/>
            <person name="Frapy E."/>
            <person name="Garry L."/>
            <person name="Ghigo J.M."/>
            <person name="Gilles A.M."/>
            <person name="Johnson J."/>
            <person name="Le Bouguenec C."/>
            <person name="Lescat M."/>
            <person name="Mangenot S."/>
            <person name="Martinez-Jehanne V."/>
            <person name="Matic I."/>
            <person name="Nassif X."/>
            <person name="Oztas S."/>
            <person name="Petit M.A."/>
            <person name="Pichon C."/>
            <person name="Rouy Z."/>
            <person name="Ruf C.S."/>
            <person name="Schneider D."/>
            <person name="Tourret J."/>
            <person name="Vacherie B."/>
            <person name="Vallenet D."/>
            <person name="Medigue C."/>
            <person name="Rocha E.P.C."/>
            <person name="Denamur E."/>
        </authorList>
    </citation>
    <scope>NUCLEOTIDE SEQUENCE [LARGE SCALE GENOMIC DNA]</scope>
    <source>
        <strain>IAI39 / ExPEC</strain>
    </source>
</reference>
<proteinExistence type="inferred from homology"/>
<protein>
    <recommendedName>
        <fullName evidence="1">Cytochrome c-552</fullName>
        <ecNumber evidence="1">1.7.2.2</ecNumber>
    </recommendedName>
    <alternativeName>
        <fullName evidence="1">Ammonia-forming cytochrome c nitrite reductase</fullName>
        <shortName evidence="1">Cytochrome c nitrite reductase</shortName>
    </alternativeName>
</protein>
<gene>
    <name evidence="1" type="primary">nrfA</name>
    <name type="ordered locus">ECIAI39_4492</name>
</gene>
<organism>
    <name type="scientific">Escherichia coli O7:K1 (strain IAI39 / ExPEC)</name>
    <dbReference type="NCBI Taxonomy" id="585057"/>
    <lineage>
        <taxon>Bacteria</taxon>
        <taxon>Pseudomonadati</taxon>
        <taxon>Pseudomonadota</taxon>
        <taxon>Gammaproteobacteria</taxon>
        <taxon>Enterobacterales</taxon>
        <taxon>Enterobacteriaceae</taxon>
        <taxon>Escherichia</taxon>
    </lineage>
</organism>
<evidence type="ECO:0000255" key="1">
    <source>
        <dbReference type="HAMAP-Rule" id="MF_01182"/>
    </source>
</evidence>
<comment type="function">
    <text evidence="1">Catalyzes the reduction of nitrite to ammonia, consuming six electrons in the process.</text>
</comment>
<comment type="catalytic activity">
    <reaction evidence="1">
        <text>6 Fe(III)-[cytochrome c] + NH4(+) + 2 H2O = 6 Fe(II)-[cytochrome c] + nitrite + 8 H(+)</text>
        <dbReference type="Rhea" id="RHEA:13089"/>
        <dbReference type="Rhea" id="RHEA-COMP:10350"/>
        <dbReference type="Rhea" id="RHEA-COMP:14399"/>
        <dbReference type="ChEBI" id="CHEBI:15377"/>
        <dbReference type="ChEBI" id="CHEBI:15378"/>
        <dbReference type="ChEBI" id="CHEBI:16301"/>
        <dbReference type="ChEBI" id="CHEBI:28938"/>
        <dbReference type="ChEBI" id="CHEBI:29033"/>
        <dbReference type="ChEBI" id="CHEBI:29034"/>
        <dbReference type="EC" id="1.7.2.2"/>
    </reaction>
</comment>
<comment type="cofactor">
    <cofactor evidence="1">
        <name>Ca(2+)</name>
        <dbReference type="ChEBI" id="CHEBI:29108"/>
    </cofactor>
    <text evidence="1">Binds 1 Ca(2+) ion per monomer.</text>
</comment>
<comment type="cofactor">
    <cofactor evidence="1">
        <name>heme c</name>
        <dbReference type="ChEBI" id="CHEBI:61717"/>
    </cofactor>
    <text evidence="1">Binds 5 heme c groups covalently per monomer.</text>
</comment>
<comment type="pathway">
    <text evidence="1">Nitrogen metabolism; nitrate reduction (assimilation).</text>
</comment>
<comment type="subcellular location">
    <subcellularLocation>
        <location evidence="1">Periplasm</location>
    </subcellularLocation>
</comment>
<comment type="similarity">
    <text evidence="1">Belongs to the cytochrome c-552 family.</text>
</comment>
<feature type="signal peptide" evidence="1">
    <location>
        <begin position="1"/>
        <end position="26"/>
    </location>
</feature>
<feature type="chain" id="PRO_1000138211" description="Cytochrome c-552">
    <location>
        <begin position="27"/>
        <end position="478"/>
    </location>
</feature>
<feature type="binding site" description="axial binding residue" evidence="1">
    <location>
        <position position="94"/>
    </location>
    <ligand>
        <name>heme c</name>
        <dbReference type="ChEBI" id="CHEBI:61717"/>
        <label>3</label>
    </ligand>
    <ligandPart>
        <name>Fe</name>
        <dbReference type="ChEBI" id="CHEBI:18248"/>
    </ligandPart>
</feature>
<feature type="binding site" description="covalent" evidence="1">
    <location>
        <position position="122"/>
    </location>
    <ligand>
        <name>heme</name>
        <dbReference type="ChEBI" id="CHEBI:30413"/>
        <label>1</label>
    </ligand>
</feature>
<feature type="binding site" description="covalent" evidence="1">
    <location>
        <position position="125"/>
    </location>
    <ligand>
        <name>heme</name>
        <dbReference type="ChEBI" id="CHEBI:30413"/>
        <label>1</label>
    </ligand>
</feature>
<feature type="binding site" description="axial binding residue" evidence="1">
    <location>
        <position position="126"/>
    </location>
    <ligand>
        <name>heme</name>
        <dbReference type="ChEBI" id="CHEBI:30413"/>
        <label>1</label>
    </ligand>
    <ligandPart>
        <name>Fe</name>
        <dbReference type="ChEBI" id="CHEBI:18248"/>
    </ligandPart>
</feature>
<feature type="binding site" description="covalent" evidence="1">
    <location>
        <position position="160"/>
    </location>
    <ligand>
        <name>heme c</name>
        <dbReference type="ChEBI" id="CHEBI:61717"/>
        <label>2</label>
    </ligand>
</feature>
<feature type="binding site" description="covalent" evidence="1">
    <location>
        <position position="163"/>
    </location>
    <ligand>
        <name>heme c</name>
        <dbReference type="ChEBI" id="CHEBI:61717"/>
        <label>2</label>
    </ligand>
</feature>
<feature type="binding site" description="axial binding residue" evidence="1">
    <location>
        <position position="164"/>
    </location>
    <ligand>
        <name>heme c</name>
        <dbReference type="ChEBI" id="CHEBI:61717"/>
        <label>2</label>
    </ligand>
    <ligandPart>
        <name>Fe</name>
        <dbReference type="ChEBI" id="CHEBI:18248"/>
    </ligandPart>
</feature>
<feature type="binding site" description="covalent" evidence="1">
    <location>
        <position position="209"/>
    </location>
    <ligand>
        <name>heme c</name>
        <dbReference type="ChEBI" id="CHEBI:61717"/>
        <label>3</label>
    </ligand>
</feature>
<feature type="binding site" description="covalent" evidence="1">
    <location>
        <position position="212"/>
    </location>
    <ligand>
        <name>heme c</name>
        <dbReference type="ChEBI" id="CHEBI:61717"/>
        <label>3</label>
    </ligand>
</feature>
<feature type="binding site" description="axial binding residue" evidence="1">
    <location>
        <position position="213"/>
    </location>
    <ligand>
        <name>heme c</name>
        <dbReference type="ChEBI" id="CHEBI:61717"/>
        <label>3</label>
    </ligand>
    <ligandPart>
        <name>Fe</name>
        <dbReference type="ChEBI" id="CHEBI:18248"/>
    </ligandPart>
</feature>
<feature type="binding site" evidence="1">
    <location>
        <position position="215"/>
    </location>
    <ligand>
        <name>Ca(2+)</name>
        <dbReference type="ChEBI" id="CHEBI:29108"/>
    </ligand>
</feature>
<feature type="binding site" evidence="1">
    <location>
        <position position="216"/>
    </location>
    <ligand>
        <name>Ca(2+)</name>
        <dbReference type="ChEBI" id="CHEBI:29108"/>
    </ligand>
</feature>
<feature type="binding site" evidence="1">
    <location>
        <position position="216"/>
    </location>
    <ligand>
        <name>substrate</name>
    </ligand>
</feature>
<feature type="binding site" evidence="1">
    <location>
        <position position="261"/>
    </location>
    <ligand>
        <name>Ca(2+)</name>
        <dbReference type="ChEBI" id="CHEBI:29108"/>
    </ligand>
</feature>
<feature type="binding site" evidence="1">
    <location>
        <position position="263"/>
    </location>
    <ligand>
        <name>Ca(2+)</name>
        <dbReference type="ChEBI" id="CHEBI:29108"/>
    </ligand>
</feature>
<feature type="binding site" evidence="1">
    <location>
        <position position="264"/>
    </location>
    <ligand>
        <name>substrate</name>
    </ligand>
</feature>
<feature type="binding site" description="axial binding residue" evidence="1">
    <location>
        <position position="275"/>
    </location>
    <ligand>
        <name>heme c</name>
        <dbReference type="ChEBI" id="CHEBI:61717"/>
        <label>5</label>
    </ligand>
    <ligandPart>
        <name>Fe</name>
        <dbReference type="ChEBI" id="CHEBI:18248"/>
    </ligandPart>
</feature>
<feature type="binding site" description="covalent" evidence="1">
    <location>
        <position position="282"/>
    </location>
    <ligand>
        <name>heme c</name>
        <dbReference type="ChEBI" id="CHEBI:61717"/>
        <label>4</label>
    </ligand>
</feature>
<feature type="binding site" description="covalent" evidence="1">
    <location>
        <position position="285"/>
    </location>
    <ligand>
        <name>heme c</name>
        <dbReference type="ChEBI" id="CHEBI:61717"/>
        <label>4</label>
    </ligand>
</feature>
<feature type="binding site" description="axial binding residue" evidence="1">
    <location>
        <position position="286"/>
    </location>
    <ligand>
        <name>heme c</name>
        <dbReference type="ChEBI" id="CHEBI:61717"/>
        <label>4</label>
    </ligand>
    <ligandPart>
        <name>Fe</name>
        <dbReference type="ChEBI" id="CHEBI:18248"/>
    </ligandPart>
</feature>
<feature type="binding site" description="axial binding residue" evidence="1">
    <location>
        <position position="301"/>
    </location>
    <ligand>
        <name>heme c</name>
        <dbReference type="ChEBI" id="CHEBI:61717"/>
        <label>2</label>
    </ligand>
    <ligandPart>
        <name>Fe</name>
        <dbReference type="ChEBI" id="CHEBI:18248"/>
    </ligandPart>
</feature>
<feature type="binding site" description="covalent" evidence="1">
    <location>
        <position position="314"/>
    </location>
    <ligand>
        <name>heme c</name>
        <dbReference type="ChEBI" id="CHEBI:61717"/>
        <label>5</label>
    </ligand>
</feature>
<feature type="binding site" description="covalent" evidence="1">
    <location>
        <position position="317"/>
    </location>
    <ligand>
        <name>heme c</name>
        <dbReference type="ChEBI" id="CHEBI:61717"/>
        <label>5</label>
    </ligand>
</feature>
<feature type="binding site" description="axial binding residue" evidence="1">
    <location>
        <position position="318"/>
    </location>
    <ligand>
        <name>heme c</name>
        <dbReference type="ChEBI" id="CHEBI:61717"/>
        <label>5</label>
    </ligand>
    <ligandPart>
        <name>Fe</name>
        <dbReference type="ChEBI" id="CHEBI:18248"/>
    </ligandPart>
</feature>
<feature type="binding site" description="axial binding residue" evidence="1">
    <location>
        <position position="393"/>
    </location>
    <ligand>
        <name>heme c</name>
        <dbReference type="ChEBI" id="CHEBI:61717"/>
        <label>4</label>
    </ligand>
    <ligandPart>
        <name>Fe</name>
        <dbReference type="ChEBI" id="CHEBI:18248"/>
    </ligandPart>
</feature>
<keyword id="KW-0106">Calcium</keyword>
<keyword id="KW-0249">Electron transport</keyword>
<keyword id="KW-0349">Heme</keyword>
<keyword id="KW-0408">Iron</keyword>
<keyword id="KW-0479">Metal-binding</keyword>
<keyword id="KW-0560">Oxidoreductase</keyword>
<keyword id="KW-0574">Periplasm</keyword>
<keyword id="KW-0732">Signal</keyword>
<keyword id="KW-0813">Transport</keyword>
<name>NRFA_ECO7I</name>